<name>INCG_CHLTR</name>
<accession>P0DPS6</accession>
<accession>O84120</accession>
<accession>Q9RPP8</accession>
<dbReference type="EMBL" id="AE001273">
    <property type="protein sequence ID" value="AAC67709.1"/>
    <property type="molecule type" value="Genomic_DNA"/>
</dbReference>
<dbReference type="PIR" id="B71553">
    <property type="entry name" value="B71553"/>
</dbReference>
<dbReference type="RefSeq" id="NP_219621.1">
    <property type="nucleotide sequence ID" value="NC_000117.1"/>
</dbReference>
<dbReference type="RefSeq" id="WP_009871465.1">
    <property type="nucleotide sequence ID" value="NC_000117.1"/>
</dbReference>
<dbReference type="IntAct" id="P0DPS6">
    <property type="interactions" value="1"/>
</dbReference>
<dbReference type="MINT" id="P0DPS6"/>
<dbReference type="STRING" id="272561.CT_118"/>
<dbReference type="EnsemblBacteria" id="AAC67709">
    <property type="protein sequence ID" value="AAC67709"/>
    <property type="gene ID" value="CT_118"/>
</dbReference>
<dbReference type="GeneID" id="884170"/>
<dbReference type="KEGG" id="ctr:CT_118"/>
<dbReference type="InParanoid" id="P0DPS6"/>
<dbReference type="Proteomes" id="UP000000431">
    <property type="component" value="Chromosome"/>
</dbReference>
<dbReference type="GO" id="GO:0005576">
    <property type="term" value="C:extracellular region"/>
    <property type="evidence" value="ECO:0007669"/>
    <property type="project" value="UniProtKB-SubCell"/>
</dbReference>
<dbReference type="GO" id="GO:0033644">
    <property type="term" value="C:host cell membrane"/>
    <property type="evidence" value="ECO:0007669"/>
    <property type="project" value="UniProtKB-KW"/>
</dbReference>
<dbReference type="GO" id="GO:0140221">
    <property type="term" value="C:pathogen-containing vacuole membrane"/>
    <property type="evidence" value="ECO:0000314"/>
    <property type="project" value="UniProtKB"/>
</dbReference>
<proteinExistence type="evidence at protein level"/>
<keyword id="KW-1043">Host membrane</keyword>
<keyword id="KW-0472">Membrane</keyword>
<keyword id="KW-0597">Phosphoprotein</keyword>
<keyword id="KW-1185">Reference proteome</keyword>
<keyword id="KW-0964">Secreted</keyword>
<keyword id="KW-0812">Transmembrane</keyword>
<keyword id="KW-1133">Transmembrane helix</keyword>
<keyword id="KW-0843">Virulence</keyword>
<sequence length="167" mass="17405">MICCDKVLSSVQSMPVIDKCSVTKCLQTAKQAAVLALSLFAVFASGSLSILSAAVLFSGTAAVLPYLLILTTALLGFVCAVIVLLRNLSAVVQSCKKRSPEEIEGAARPSDQQESGGRLSEESASPQASPTSSTFGLESALRSIGDSVSGAFDDINKDNSRSRSHSF</sequence>
<protein>
    <recommendedName>
        <fullName>Inclusion membrane protein G</fullName>
    </recommendedName>
</protein>
<reference key="1">
    <citation type="journal article" date="1998" name="Science">
        <title>Genome sequence of an obligate intracellular pathogen of humans: Chlamydia trachomatis.</title>
        <authorList>
            <person name="Stephens R.S."/>
            <person name="Kalman S."/>
            <person name="Lammel C.J."/>
            <person name="Fan J."/>
            <person name="Marathe R."/>
            <person name="Aravind L."/>
            <person name="Mitchell W.P."/>
            <person name="Olinger L."/>
            <person name="Tatusov R.L."/>
            <person name="Zhao Q."/>
            <person name="Koonin E.V."/>
            <person name="Davis R.W."/>
        </authorList>
    </citation>
    <scope>NUCLEOTIDE SEQUENCE [LARGE SCALE GENOMIC DNA]</scope>
    <source>
        <strain>ATCC VR-885 / DSM 19411 / UW-3/Cx</strain>
    </source>
</reference>
<reference key="2">
    <citation type="journal article" date="2001" name="Mol. Microbiol.">
        <title>Mammalian 14-3-3beta associates with the Chlamydia trachomatis inclusion membrane via its interaction with IncG.</title>
        <authorList>
            <person name="Scidmore M.A."/>
            <person name="Hackstadt T."/>
        </authorList>
    </citation>
    <scope>SUBCELLULAR LOCATION</scope>
    <source>
        <strain>ATCC VR-885 / DSM 19411 / UW-3/Cx</strain>
    </source>
</reference>
<reference key="3">
    <citation type="journal article" date="2003" name="Infect. Immun.">
        <title>Identification of two eukaryote-like serine/threonine kinases encoded by Chlamydia trachomatis serovar L2 and characterization of interacting partners of Pkn1.</title>
        <authorList>
            <person name="Verma A."/>
            <person name="Maurelli A.T."/>
        </authorList>
    </citation>
    <scope>INTERACTION WITH PKN1</scope>
    <source>
        <strain>L2</strain>
    </source>
</reference>
<organism>
    <name type="scientific">Chlamydia trachomatis serovar D (strain ATCC VR-885 / DSM 19411 / UW-3/Cx)</name>
    <dbReference type="NCBI Taxonomy" id="272561"/>
    <lineage>
        <taxon>Bacteria</taxon>
        <taxon>Pseudomonadati</taxon>
        <taxon>Chlamydiota</taxon>
        <taxon>Chlamydiia</taxon>
        <taxon>Chlamydiales</taxon>
        <taxon>Chlamydiaceae</taxon>
        <taxon>Chlamydia/Chlamydophila group</taxon>
        <taxon>Chlamydia</taxon>
    </lineage>
</organism>
<feature type="chain" id="PRO_0000084204" description="Inclusion membrane protein G">
    <location>
        <begin position="1"/>
        <end position="167"/>
    </location>
</feature>
<feature type="transmembrane region" description="Helical" evidence="2">
    <location>
        <begin position="37"/>
        <end position="57"/>
    </location>
</feature>
<feature type="transmembrane region" description="Helical" evidence="2">
    <location>
        <begin position="63"/>
        <end position="83"/>
    </location>
</feature>
<feature type="region of interest" description="Disordered" evidence="3">
    <location>
        <begin position="97"/>
        <end position="136"/>
    </location>
</feature>
<feature type="region of interest" description="Disordered" evidence="3">
    <location>
        <begin position="148"/>
        <end position="167"/>
    </location>
</feature>
<feature type="short sequence motif" description="Phosphorylation-dependent binding motif" evidence="1">
    <location>
        <begin position="161"/>
        <end position="166"/>
    </location>
</feature>
<feature type="compositionally biased region" description="Low complexity" evidence="3">
    <location>
        <begin position="122"/>
        <end position="134"/>
    </location>
</feature>
<feature type="site" description="Interacts with 14-3-3 beta" evidence="1">
    <location>
        <position position="166"/>
    </location>
</feature>
<feature type="modified residue" description="Phosphoserine" evidence="1">
    <location>
        <position position="166"/>
    </location>
</feature>
<comment type="function">
    <text evidence="1">Inclusion membrane protein probably involved in early modification events of the chlamydial inclusion (By similarity). Binds to the host cell 14-3-3 beta (YWHAB); phosphorylation of Ser-166 is probably required (By similarity).</text>
</comment>
<comment type="subcellular location">
    <subcellularLocation>
        <location evidence="1">Secreted</location>
    </subcellularLocation>
    <subcellularLocation>
        <location evidence="5">Host vacuole</location>
        <location evidence="5">Host pathogen-containing vacuole</location>
        <location evidence="5">Host pathogen-containing vacuole membrane</location>
        <topology evidence="2">Multi-pass membrane protein</topology>
    </subcellularLocation>
    <text evidence="1">Secreted, probably by a type III secretion system (By similarity). Localized in the inclusion membrane (By similarity).</text>
</comment>
<comment type="PTM">
    <text evidence="4">Phosphorylated by chlamydial kinase Pnk1.</text>
</comment>
<gene>
    <name type="primary">incG</name>
    <name type="ordered locus">CT_118</name>
</gene>
<evidence type="ECO:0000250" key="1">
    <source>
        <dbReference type="UniProtKB" id="A0A0H3MGR4"/>
    </source>
</evidence>
<evidence type="ECO:0000255" key="2"/>
<evidence type="ECO:0000256" key="3">
    <source>
        <dbReference type="SAM" id="MobiDB-lite"/>
    </source>
</evidence>
<evidence type="ECO:0000269" key="4">
    <source>
    </source>
</evidence>
<evidence type="ECO:0000305" key="5">
    <source>
    </source>
</evidence>